<name>KAP2_BOVIN</name>
<comment type="function">
    <text evidence="1">Regulatory subunit of the cAMP-dependent protein kinases involved in cAMP signaling in cells. Type II regulatory chains mediate membrane association by binding to anchoring proteins, including the MAP2 kinase (By similarity).</text>
</comment>
<comment type="subunit">
    <text evidence="1 2">The inactive form of the enzyme is composed of two regulatory chains and two catalytic chains. Activation by cAMP produces two active catalytic monomers and a regulatory dimer that binds four cAMP molecules. Interacts with AKAP4 and CBFA2T3 (By similarity). Interacts with the phosphorylated form of PJA2 (By similarity). Interacts with MYRIP; this interaction may link PKA to components of the exocytosis machinery, thus facilitating exocytosis, including insulin release (By similarity). Forms a complex composed of PRKAR2A, GSK3B and GSKIP through GSKIP interaction; facilitates PKA-induced phosphorylation and regulates GSK3B activity (By similarity). Interacts with ADCY8; inhibits adenylate cyclase activity through PKA phosphorylation (By similarity).</text>
</comment>
<comment type="interaction">
    <interactant intactId="EBI-7634955">
        <id>P00515</id>
    </interactant>
    <interactant intactId="EBI-8037154">
        <id>Q6XGM8</id>
        <label>C</label>
    </interactant>
    <organismsDiffer>true</organismsDiffer>
    <experiments>3</experiments>
</comment>
<comment type="subcellular location">
    <subcellularLocation>
        <location evidence="1">Cytoplasm</location>
    </subcellularLocation>
    <subcellularLocation>
        <location evidence="1">Cell membrane</location>
    </subcellularLocation>
    <text evidence="1">Colocalizes with PJA2 in the cytoplasm and the cell membrane.</text>
</comment>
<comment type="tissue specificity">
    <text>Four types of regulatory chains are found: I-alpha, I-beta, II-alpha, and II-beta. Their expression varies among tissues and is in some cases constitutive and in others inducible.</text>
</comment>
<comment type="PTM">
    <text evidence="4">A second phosphorylation site has not been located.</text>
</comment>
<comment type="PTM">
    <text evidence="4">Phosphorylation of Thr-212 by PDPK1 seems to attenuate the activity of PKA, perhaps by strengthening interaction between the regulatory and the catalytic subunits.</text>
</comment>
<comment type="similarity">
    <text evidence="6">Belongs to the cAMP-dependent kinase regulatory chain family.</text>
</comment>
<feature type="initiator methionine" description="Removed" evidence="2 5">
    <location>
        <position position="1"/>
    </location>
</feature>
<feature type="chain" id="PRO_0000205384" description="cAMP-dependent protein kinase type II-alpha regulatory subunit">
    <location>
        <begin position="2"/>
        <end position="401"/>
    </location>
</feature>
<feature type="region of interest" description="Dimerization and phosphorylation">
    <location>
        <begin position="2"/>
        <end position="135"/>
    </location>
</feature>
<feature type="region of interest" description="Disordered" evidence="3">
    <location>
        <begin position="43"/>
        <end position="65"/>
    </location>
</feature>
<feature type="compositionally biased region" description="Low complexity" evidence="3">
    <location>
        <begin position="46"/>
        <end position="58"/>
    </location>
</feature>
<feature type="binding site">
    <location>
        <begin position="136"/>
        <end position="257"/>
    </location>
    <ligand>
        <name>3',5'-cyclic AMP</name>
        <dbReference type="ChEBI" id="CHEBI:58165"/>
        <label>1</label>
    </ligand>
</feature>
<feature type="binding site">
    <location>
        <position position="205"/>
    </location>
    <ligand>
        <name>3',5'-cyclic AMP</name>
        <dbReference type="ChEBI" id="CHEBI:58165"/>
        <label>1</label>
    </ligand>
</feature>
<feature type="binding site">
    <location>
        <position position="214"/>
    </location>
    <ligand>
        <name>3',5'-cyclic AMP</name>
        <dbReference type="ChEBI" id="CHEBI:58165"/>
        <label>1</label>
    </ligand>
</feature>
<feature type="binding site">
    <location>
        <begin position="258"/>
        <end position="401"/>
    </location>
    <ligand>
        <name>3',5'-cyclic AMP</name>
        <dbReference type="ChEBI" id="CHEBI:58165"/>
        <label>2</label>
    </ligand>
</feature>
<feature type="binding site">
    <location>
        <position position="335"/>
    </location>
    <ligand>
        <name>3',5'-cyclic AMP</name>
        <dbReference type="ChEBI" id="CHEBI:58165"/>
        <label>2</label>
    </ligand>
</feature>
<feature type="binding site">
    <location>
        <position position="344"/>
    </location>
    <ligand>
        <name>3',5'-cyclic AMP</name>
        <dbReference type="ChEBI" id="CHEBI:58165"/>
        <label>2</label>
    </ligand>
</feature>
<feature type="modified residue" description="N-acetylserine" evidence="2">
    <location>
        <position position="2"/>
    </location>
</feature>
<feature type="modified residue" description="Phosphoserine" evidence="2">
    <location>
        <position position="48"/>
    </location>
</feature>
<feature type="modified residue" description="Phosphoserine" evidence="2">
    <location>
        <position position="75"/>
    </location>
</feature>
<feature type="modified residue" description="Phosphoserine" evidence="2">
    <location>
        <position position="77"/>
    </location>
</feature>
<feature type="modified residue" description="Phosphoserine; by PKA" evidence="2">
    <location>
        <position position="96"/>
    </location>
</feature>
<feature type="modified residue" description="Phosphothreonine; by PDPK1" evidence="4">
    <location>
        <position position="212"/>
    </location>
</feature>
<feature type="modified residue" description="Phosphoserine" evidence="2">
    <location>
        <position position="347"/>
    </location>
</feature>
<feature type="modified residue" description="Phosphoserine" evidence="2">
    <location>
        <position position="392"/>
    </location>
</feature>
<reference key="1">
    <citation type="journal article" date="1982" name="Proc. Natl. Acad. Sci. U.S.A.">
        <title>Primary structure of the regulatory subunit of type II cAMP-dependent protein kinase from bovine cardiac muscle.</title>
        <authorList>
            <person name="Takio K."/>
            <person name="Smith S.B."/>
            <person name="Krebs E.G."/>
            <person name="Walsh K.A."/>
            <person name="Titani K."/>
        </authorList>
    </citation>
    <scope>PROTEIN SEQUENCE OF 2-401</scope>
    <source>
        <tissue>Heart muscle</tissue>
    </source>
</reference>
<reference key="2">
    <citation type="journal article" date="1991" name="Arch. Biochem. Biophys.">
        <title>Phosphorylation of RII subunit and attenuation of cAMP-dependent protein kinase activity by proline-directed protein kinase.</title>
        <authorList>
            <person name="Braun R.K."/>
            <person name="Vulliet P.R."/>
            <person name="Carbonaro-Hall D.A."/>
            <person name="Hall F.L."/>
        </authorList>
    </citation>
    <scope>PROTEIN SEQUENCE OF 155-166</scope>
    <scope>PHOSPHORYLATION AT THR-212</scope>
</reference>
<reference key="3">
    <citation type="journal article" date="1987" name="Biochemistry">
        <title>Predicted structures of cAMP binding domains of type I and II regulatory subunits of cAMP-dependent protein kinase.</title>
        <authorList>
            <person name="Weber I.T."/>
            <person name="Steitz T.A."/>
            <person name="Bubis J."/>
            <person name="Taylor S.S."/>
        </authorList>
    </citation>
    <scope>3D-STRUCTURE MODELING</scope>
</reference>
<proteinExistence type="evidence at protein level"/>
<keyword id="KW-0007">Acetylation</keyword>
<keyword id="KW-0114">cAMP</keyword>
<keyword id="KW-0116">cAMP-binding</keyword>
<keyword id="KW-1003">Cell membrane</keyword>
<keyword id="KW-0963">Cytoplasm</keyword>
<keyword id="KW-0903">Direct protein sequencing</keyword>
<keyword id="KW-0472">Membrane</keyword>
<keyword id="KW-0547">Nucleotide-binding</keyword>
<keyword id="KW-0597">Phosphoprotein</keyword>
<keyword id="KW-1185">Reference proteome</keyword>
<keyword id="KW-0677">Repeat</keyword>
<dbReference type="PIR" id="A00618">
    <property type="entry name" value="OKBO2R"/>
</dbReference>
<dbReference type="RefSeq" id="NP_001178296.1">
    <property type="nucleotide sequence ID" value="NM_001191367.2"/>
</dbReference>
<dbReference type="SMR" id="P00515"/>
<dbReference type="DIP" id="DIP-546N"/>
<dbReference type="ELM" id="P00515"/>
<dbReference type="FunCoup" id="P00515">
    <property type="interactions" value="2082"/>
</dbReference>
<dbReference type="IntAct" id="P00515">
    <property type="interactions" value="4"/>
</dbReference>
<dbReference type="MINT" id="P00515"/>
<dbReference type="STRING" id="9913.ENSBTAP00000018886"/>
<dbReference type="ChEMBL" id="CHEMBL2111446"/>
<dbReference type="DrugCentral" id="P00515"/>
<dbReference type="iPTMnet" id="P00515"/>
<dbReference type="PaxDb" id="9913-ENSBTAP00000018886"/>
<dbReference type="PeptideAtlas" id="P00515"/>
<dbReference type="GeneID" id="100139910"/>
<dbReference type="KEGG" id="bta:100139910"/>
<dbReference type="CTD" id="5576"/>
<dbReference type="VEuPathDB" id="HostDB:ENSBTAG00000014205"/>
<dbReference type="eggNOG" id="KOG1113">
    <property type="taxonomic scope" value="Eukaryota"/>
</dbReference>
<dbReference type="HOGENOM" id="CLU_018310_2_0_1"/>
<dbReference type="InParanoid" id="P00515"/>
<dbReference type="OMA" id="SQTRCVG"/>
<dbReference type="OrthoDB" id="417078at2759"/>
<dbReference type="TreeFam" id="TF314920"/>
<dbReference type="Reactome" id="R-BTA-163615">
    <property type="pathway name" value="PKA activation"/>
</dbReference>
<dbReference type="Reactome" id="R-BTA-164378">
    <property type="pathway name" value="PKA activation in glucagon signalling"/>
</dbReference>
<dbReference type="Reactome" id="R-BTA-180024">
    <property type="pathway name" value="DARPP-32 events"/>
</dbReference>
<dbReference type="Reactome" id="R-BTA-432040">
    <property type="pathway name" value="Vasopressin regulates renal water homeostasis via Aquaporins"/>
</dbReference>
<dbReference type="Reactome" id="R-BTA-442720">
    <property type="pathway name" value="CREB1 phosphorylation through the activation of Adenylate Cyclase"/>
</dbReference>
<dbReference type="Reactome" id="R-BTA-5610787">
    <property type="pathway name" value="Hedgehog 'off' state"/>
</dbReference>
<dbReference type="Reactome" id="R-BTA-9634597">
    <property type="pathway name" value="GPER1 signaling"/>
</dbReference>
<dbReference type="Reactome" id="R-BTA-983231">
    <property type="pathway name" value="Factors involved in megakaryocyte development and platelet production"/>
</dbReference>
<dbReference type="Reactome" id="R-BTA-9856530">
    <property type="pathway name" value="High laminar flow shear stress activates signaling by PIEZO1 and PECAM1:CDH5:KDR in endothelial cells"/>
</dbReference>
<dbReference type="PRO" id="PR:P00515"/>
<dbReference type="Proteomes" id="UP000009136">
    <property type="component" value="Chromosome 22"/>
</dbReference>
<dbReference type="Bgee" id="ENSBTAG00000014205">
    <property type="expression patterns" value="Expressed in spermatid and 107 other cell types or tissues"/>
</dbReference>
<dbReference type="GO" id="GO:0005952">
    <property type="term" value="C:cAMP-dependent protein kinase complex"/>
    <property type="evidence" value="ECO:0000318"/>
    <property type="project" value="GO_Central"/>
</dbReference>
<dbReference type="GO" id="GO:0005829">
    <property type="term" value="C:cytosol"/>
    <property type="evidence" value="ECO:0000318"/>
    <property type="project" value="GO_Central"/>
</dbReference>
<dbReference type="GO" id="GO:0005886">
    <property type="term" value="C:plasma membrane"/>
    <property type="evidence" value="ECO:0007669"/>
    <property type="project" value="UniProtKB-SubCell"/>
</dbReference>
<dbReference type="GO" id="GO:0030552">
    <property type="term" value="F:cAMP binding"/>
    <property type="evidence" value="ECO:0000318"/>
    <property type="project" value="GO_Central"/>
</dbReference>
<dbReference type="GO" id="GO:0004862">
    <property type="term" value="F:cAMP-dependent protein kinase inhibitor activity"/>
    <property type="evidence" value="ECO:0000318"/>
    <property type="project" value="GO_Central"/>
</dbReference>
<dbReference type="GO" id="GO:0034236">
    <property type="term" value="F:protein kinase A catalytic subunit binding"/>
    <property type="evidence" value="ECO:0000318"/>
    <property type="project" value="GO_Central"/>
</dbReference>
<dbReference type="GO" id="GO:0007189">
    <property type="term" value="P:adenylate cyclase-activating G protein-coupled receptor signaling pathway"/>
    <property type="evidence" value="ECO:0000318"/>
    <property type="project" value="GO_Central"/>
</dbReference>
<dbReference type="CDD" id="cd00038">
    <property type="entry name" value="CAP_ED"/>
    <property type="match status" value="2"/>
</dbReference>
<dbReference type="CDD" id="cd12103">
    <property type="entry name" value="DD_RIIalpha_PKA"/>
    <property type="match status" value="1"/>
</dbReference>
<dbReference type="FunFam" id="2.60.120.10:FF:000017">
    <property type="entry name" value="cAMP-dependent protein kinase type II regulatory subunit"/>
    <property type="match status" value="1"/>
</dbReference>
<dbReference type="FunFam" id="1.20.890.10:FF:000002">
    <property type="entry name" value="cAMP-dependent protein kinase type II-alpha regulatory subunit"/>
    <property type="match status" value="1"/>
</dbReference>
<dbReference type="FunFam" id="2.60.120.10:FF:000027">
    <property type="entry name" value="Protein kinase cAMP-dependent type II regulatory subunit alpha"/>
    <property type="match status" value="1"/>
</dbReference>
<dbReference type="Gene3D" id="1.20.890.10">
    <property type="entry name" value="cAMP-dependent protein kinase regulatory subunit, dimerization-anchoring domain"/>
    <property type="match status" value="1"/>
</dbReference>
<dbReference type="Gene3D" id="2.60.120.10">
    <property type="entry name" value="Jelly Rolls"/>
    <property type="match status" value="2"/>
</dbReference>
<dbReference type="InterPro" id="IPR050503">
    <property type="entry name" value="cAMP-dep_PK_reg_su-like"/>
</dbReference>
<dbReference type="InterPro" id="IPR012198">
    <property type="entry name" value="cAMP_dep_PK_reg_su"/>
</dbReference>
<dbReference type="InterPro" id="IPR003117">
    <property type="entry name" value="cAMP_dep_PK_reg_su_I/II_a/b"/>
</dbReference>
<dbReference type="InterPro" id="IPR018488">
    <property type="entry name" value="cNMP-bd_CS"/>
</dbReference>
<dbReference type="InterPro" id="IPR000595">
    <property type="entry name" value="cNMP-bd_dom"/>
</dbReference>
<dbReference type="InterPro" id="IPR018490">
    <property type="entry name" value="cNMP-bd_dom_sf"/>
</dbReference>
<dbReference type="InterPro" id="IPR014710">
    <property type="entry name" value="RmlC-like_jellyroll"/>
</dbReference>
<dbReference type="PANTHER" id="PTHR11635">
    <property type="entry name" value="CAMP-DEPENDENT PROTEIN KINASE REGULATORY CHAIN"/>
    <property type="match status" value="1"/>
</dbReference>
<dbReference type="PANTHER" id="PTHR11635:SF153">
    <property type="entry name" value="CAMP-DEPENDENT PROTEIN KINASE TYPE II-ALPHA REGULATORY SUBUNIT"/>
    <property type="match status" value="1"/>
</dbReference>
<dbReference type="Pfam" id="PF00027">
    <property type="entry name" value="cNMP_binding"/>
    <property type="match status" value="2"/>
</dbReference>
<dbReference type="Pfam" id="PF02197">
    <property type="entry name" value="RIIa"/>
    <property type="match status" value="1"/>
</dbReference>
<dbReference type="PIRSF" id="PIRSF000548">
    <property type="entry name" value="PK_regulatory"/>
    <property type="match status" value="1"/>
</dbReference>
<dbReference type="PRINTS" id="PR00103">
    <property type="entry name" value="CAMPKINASE"/>
</dbReference>
<dbReference type="SMART" id="SM00100">
    <property type="entry name" value="cNMP"/>
    <property type="match status" value="2"/>
</dbReference>
<dbReference type="SMART" id="SM00394">
    <property type="entry name" value="RIIa"/>
    <property type="match status" value="1"/>
</dbReference>
<dbReference type="SUPFAM" id="SSF51206">
    <property type="entry name" value="cAMP-binding domain-like"/>
    <property type="match status" value="2"/>
</dbReference>
<dbReference type="SUPFAM" id="SSF47391">
    <property type="entry name" value="Dimerization-anchoring domain of cAMP-dependent PK regulatory subunit"/>
    <property type="match status" value="1"/>
</dbReference>
<dbReference type="PROSITE" id="PS00888">
    <property type="entry name" value="CNMP_BINDING_1"/>
    <property type="match status" value="2"/>
</dbReference>
<dbReference type="PROSITE" id="PS00889">
    <property type="entry name" value="CNMP_BINDING_2"/>
    <property type="match status" value="2"/>
</dbReference>
<dbReference type="PROSITE" id="PS50042">
    <property type="entry name" value="CNMP_BINDING_3"/>
    <property type="match status" value="2"/>
</dbReference>
<accession>P00515</accession>
<gene>
    <name type="primary">PRKAR2A</name>
</gene>
<sequence length="401" mass="45094">MSHIQIPPGLTELLQGYTVEVLRQRPPDLVDFAVDYFTRLREARSRASTPPAAPPSGSQDFDPGAGLVADAVADSESEDEEDLDVPIPGRFDRRVSVCAETYNPDEEEEDTDPRVIHPKTDQQRCRLQEACKDILLFKNLDPEQLSQVLDAMFERTVKVDEHVIDQGDDGDNFYVIERGTYDILVTKDNQTRSVGQYDNHGSFGELALMYNTPRAATIVATSEGSLWGLDRVTFRRIIVKNNAKKRKMFESFIESVPLLKSLEVSERMKIVDVIGEKVYKDGERIITQGEKADSFYIIESGEVSILIKSKTKVNKDGENQEVEIARCHKGQYFGELALVTNKPRAASAYAVGDVKCLVMDVQAFERLLGPCMDIMKRNISHYEEQLVKMFGSSMDLIDPGQ</sequence>
<evidence type="ECO:0000250" key="1"/>
<evidence type="ECO:0000250" key="2">
    <source>
        <dbReference type="UniProtKB" id="P13861"/>
    </source>
</evidence>
<evidence type="ECO:0000256" key="3">
    <source>
        <dbReference type="SAM" id="MobiDB-lite"/>
    </source>
</evidence>
<evidence type="ECO:0000269" key="4">
    <source>
    </source>
</evidence>
<evidence type="ECO:0000269" key="5">
    <source>
    </source>
</evidence>
<evidence type="ECO:0000305" key="6"/>
<protein>
    <recommendedName>
        <fullName>cAMP-dependent protein kinase type II-alpha regulatory subunit</fullName>
    </recommendedName>
</protein>
<organism>
    <name type="scientific">Bos taurus</name>
    <name type="common">Bovine</name>
    <dbReference type="NCBI Taxonomy" id="9913"/>
    <lineage>
        <taxon>Eukaryota</taxon>
        <taxon>Metazoa</taxon>
        <taxon>Chordata</taxon>
        <taxon>Craniata</taxon>
        <taxon>Vertebrata</taxon>
        <taxon>Euteleostomi</taxon>
        <taxon>Mammalia</taxon>
        <taxon>Eutheria</taxon>
        <taxon>Laurasiatheria</taxon>
        <taxon>Artiodactyla</taxon>
        <taxon>Ruminantia</taxon>
        <taxon>Pecora</taxon>
        <taxon>Bovidae</taxon>
        <taxon>Bovinae</taxon>
        <taxon>Bos</taxon>
    </lineage>
</organism>